<organismHost>
    <name type="scientific">Lactuca sativa</name>
    <name type="common">Garden lettuce</name>
    <dbReference type="NCBI Taxonomy" id="4236"/>
</organismHost>
<organismHost>
    <name type="scientific">Sonchus asper</name>
    <name type="common">Spiny sowthistle</name>
    <name type="synonym">Sonchus oleraceus var. asper</name>
    <dbReference type="NCBI Taxonomy" id="50193"/>
</organismHost>
<organismHost>
    <name type="scientific">Sonchus oleraceus</name>
    <name type="common">Common sowthistle</name>
    <dbReference type="NCBI Taxonomy" id="50207"/>
</organismHost>
<keyword id="KW-0167">Capsid protein</keyword>
<keyword id="KW-1139">Helical capsid protein</keyword>
<keyword id="KW-1035">Host cytoplasm</keyword>
<keyword id="KW-1185">Reference proteome</keyword>
<keyword id="KW-0687">Ribonucleoprotein</keyword>
<keyword id="KW-0694">RNA-binding</keyword>
<keyword id="KW-0543">Viral nucleoprotein</keyword>
<keyword id="KW-0946">Virion</keyword>
<gene>
    <name type="primary">N</name>
</gene>
<organism>
    <name type="scientific">Lettuce big-vein associated virus (isolate Japan/Kagawa)</name>
    <name type="common">LBVaV</name>
    <dbReference type="NCBI Taxonomy" id="652962"/>
    <lineage>
        <taxon>Viruses</taxon>
        <taxon>Riboviria</taxon>
        <taxon>Orthornavirae</taxon>
        <taxon>Negarnaviricota</taxon>
        <taxon>Haploviricotina</taxon>
        <taxon>Monjiviricetes</taxon>
        <taxon>Mononegavirales</taxon>
        <taxon>Rhabdoviridae</taxon>
        <taxon>Betarhabdovirinae</taxon>
        <taxon>Varicosavirus</taxon>
        <taxon>Varicosavirus lactucae</taxon>
    </lineage>
</organism>
<comment type="function">
    <text>Encapsidates the genome, protecting it from nucleases. The encapsidated genomic RNA is termed the nucleocapsid (NC) and serves as template for viral transcription and replication.</text>
</comment>
<comment type="subunit">
    <text evidence="1">Homomultimerizes to form the nucleocapsid. Binds to viral genomic RNA (By similarity).</text>
</comment>
<comment type="subcellular location">
    <subcellularLocation>
        <location>Virion</location>
    </subcellularLocation>
    <subcellularLocation>
        <location evidence="1">Host cytoplasm</location>
    </subcellularLocation>
</comment>
<name>NCAP_LBVAV</name>
<reference key="1">
    <citation type="journal article" date="2001" name="J. Gen. Virol.">
        <title>Nucleotide sequence of the coat protein gene of Lettuce big-vein virus.</title>
        <authorList>
            <person name="Sasaya T."/>
            <person name="Ishikawa K."/>
            <person name="Koganezawa H."/>
        </authorList>
    </citation>
    <scope>NUCLEOTIDE SEQUENCE [GENOMIC RNA]</scope>
</reference>
<reference key="2">
    <citation type="journal article" date="2004" name="J. Gen. Virol.">
        <title>Nucleotide sequence of RNA2 of Lettuce big-vein virus and evidence for a possible transcription termination/initiation strategy similar to that of rhabdoviruses.</title>
        <authorList>
            <person name="Sasaya T."/>
            <person name="Kusaba S."/>
            <person name="Ishikawa K."/>
            <person name="Koganezawa H."/>
        </authorList>
    </citation>
    <scope>NUCLEOTIDE SEQUENCE [GENOMIC RNA]</scope>
</reference>
<reference key="3">
    <citation type="journal article" date="2005" name="Arch. Virol.">
        <title>Molecular analysis of coat protein coding region of tobacco stunt virus shows that it is a strain of Lettuce big-vein virus in the genus Varicosavirus.</title>
        <authorList>
            <person name="Sasaya T."/>
            <person name="Ishikawa K."/>
            <person name="Kuwata S."/>
            <person name="Koganezawa H."/>
        </authorList>
    </citation>
    <scope>NUCLEOTIDE SEQUENCE [GENOMIC RNA]</scope>
    <source>
        <strain>Wa</strain>
    </source>
</reference>
<sequence length="397" mass="44487">MAHPKLKMLDAFSDVVEITGKTAGKESWDDESTIAMPSYKLSVLSDADAVREVKIFLTGLFVRSSPRAIAAALIMTWNMRSVDPVAVRIFPAKDKGKDTADVDVKNLEVPGVDYIDAMVETNVKDASDIEIIRAGAFIAASTLKMFAKSFTGWTQAWEHKHIQKRYADFCKTEYPFKEFTTNNKCAETMYEAYQGQKLYQGTLGRILYALGDVADPRQTEMLFDQHLANTGMHIIPQFTNAQLSIGATTAGLLSALNYGQNFGTLMQLKKLINESLSKPPGPDNRATWRFARIFDPSVFQTLQTKYCADTVAILANINSMGKLSTETSNPLNIAVLKQMAPERKRYTRQVAKNIYHHFMVVARALNNDMFDTDKYKFVESDDEEEHVANEGETPVKE</sequence>
<protein>
    <recommendedName>
        <fullName>Nucleoprotein</fullName>
        <shortName>NP</shortName>
    </recommendedName>
    <alternativeName>
        <fullName>Nucleocapsid protein</fullName>
        <shortName>Protein N</shortName>
    </alternativeName>
</protein>
<dbReference type="EMBL" id="AB050272">
    <property type="protein sequence ID" value="BAB62027.1"/>
    <property type="molecule type" value="Genomic_RNA"/>
</dbReference>
<dbReference type="EMBL" id="AB114138">
    <property type="protein sequence ID" value="BAD36830.1"/>
    <property type="molecule type" value="Genomic_RNA"/>
</dbReference>
<dbReference type="EMBL" id="AB190528">
    <property type="protein sequence ID" value="BAD95904.1"/>
    <property type="molecule type" value="Genomic_RNA"/>
</dbReference>
<dbReference type="KEGG" id="vg:7042934"/>
<dbReference type="Proteomes" id="UP000008154">
    <property type="component" value="Genome"/>
</dbReference>
<dbReference type="GO" id="GO:0019029">
    <property type="term" value="C:helical viral capsid"/>
    <property type="evidence" value="ECO:0007669"/>
    <property type="project" value="UniProtKB-KW"/>
</dbReference>
<dbReference type="GO" id="GO:0030430">
    <property type="term" value="C:host cell cytoplasm"/>
    <property type="evidence" value="ECO:0007669"/>
    <property type="project" value="UniProtKB-SubCell"/>
</dbReference>
<dbReference type="GO" id="GO:1990904">
    <property type="term" value="C:ribonucleoprotein complex"/>
    <property type="evidence" value="ECO:0007669"/>
    <property type="project" value="UniProtKB-KW"/>
</dbReference>
<dbReference type="GO" id="GO:0019013">
    <property type="term" value="C:viral nucleocapsid"/>
    <property type="evidence" value="ECO:0007669"/>
    <property type="project" value="UniProtKB-KW"/>
</dbReference>
<dbReference type="GO" id="GO:0003723">
    <property type="term" value="F:RNA binding"/>
    <property type="evidence" value="ECO:0007669"/>
    <property type="project" value="UniProtKB-KW"/>
</dbReference>
<dbReference type="InterPro" id="IPR004902">
    <property type="entry name" value="Rhabdo_ncap_2"/>
</dbReference>
<dbReference type="Pfam" id="PF03216">
    <property type="entry name" value="Rhabdo_ncap_2"/>
    <property type="match status" value="1"/>
</dbReference>
<accession>Q91QN9</accession>
<feature type="chain" id="PRO_0000391476" description="Nucleoprotein">
    <location>
        <begin position="1"/>
        <end position="397"/>
    </location>
</feature>
<evidence type="ECO:0000250" key="1"/>
<proteinExistence type="inferred from homology"/>